<comment type="function">
    <text evidence="2">Catalyzes the reversible phosphorolytic breakdown of the N-glycosidic bond in the beta-(deoxy)ribonucleoside molecules, with the formation of the corresponding free purine bases and pentose-1-phosphate.</text>
</comment>
<comment type="catalytic activity">
    <reaction evidence="2">
        <text>a purine D-ribonucleoside + phosphate = a purine nucleobase + alpha-D-ribose 1-phosphate</text>
        <dbReference type="Rhea" id="RHEA:19805"/>
        <dbReference type="ChEBI" id="CHEBI:26386"/>
        <dbReference type="ChEBI" id="CHEBI:43474"/>
        <dbReference type="ChEBI" id="CHEBI:57720"/>
        <dbReference type="ChEBI" id="CHEBI:142355"/>
        <dbReference type="EC" id="2.4.2.1"/>
    </reaction>
</comment>
<comment type="catalytic activity">
    <reaction evidence="2">
        <text>a purine 2'-deoxy-D-ribonucleoside + phosphate = a purine nucleobase + 2-deoxy-alpha-D-ribose 1-phosphate</text>
        <dbReference type="Rhea" id="RHEA:36431"/>
        <dbReference type="ChEBI" id="CHEBI:26386"/>
        <dbReference type="ChEBI" id="CHEBI:43474"/>
        <dbReference type="ChEBI" id="CHEBI:57259"/>
        <dbReference type="ChEBI" id="CHEBI:142361"/>
        <dbReference type="EC" id="2.4.2.1"/>
    </reaction>
</comment>
<comment type="subunit">
    <text evidence="2">Homohexamer; trimer of homodimers.</text>
</comment>
<comment type="similarity">
    <text evidence="2">Belongs to the PNP/UDP phosphorylase family.</text>
</comment>
<organism>
    <name type="scientific">Photorhabdus laumondii subsp. laumondii (strain DSM 15139 / CIP 105565 / TT01)</name>
    <name type="common">Photorhabdus luminescens subsp. laumondii</name>
    <dbReference type="NCBI Taxonomy" id="243265"/>
    <lineage>
        <taxon>Bacteria</taxon>
        <taxon>Pseudomonadati</taxon>
        <taxon>Pseudomonadota</taxon>
        <taxon>Gammaproteobacteria</taxon>
        <taxon>Enterobacterales</taxon>
        <taxon>Morganellaceae</taxon>
        <taxon>Photorhabdus</taxon>
    </lineage>
</organism>
<dbReference type="EC" id="2.4.2.1" evidence="2"/>
<dbReference type="EMBL" id="BX571860">
    <property type="protein sequence ID" value="CAE12817.1"/>
    <property type="molecule type" value="Genomic_DNA"/>
</dbReference>
<dbReference type="RefSeq" id="WP_011144906.1">
    <property type="nucleotide sequence ID" value="NC_005126.1"/>
</dbReference>
<dbReference type="SMR" id="Q7N930"/>
<dbReference type="STRING" id="243265.plu0522"/>
<dbReference type="GeneID" id="48846811"/>
<dbReference type="KEGG" id="plu:plu0522"/>
<dbReference type="eggNOG" id="COG0813">
    <property type="taxonomic scope" value="Bacteria"/>
</dbReference>
<dbReference type="HOGENOM" id="CLU_068457_2_0_6"/>
<dbReference type="OrthoDB" id="9782889at2"/>
<dbReference type="Proteomes" id="UP000002514">
    <property type="component" value="Chromosome"/>
</dbReference>
<dbReference type="GO" id="GO:0005829">
    <property type="term" value="C:cytosol"/>
    <property type="evidence" value="ECO:0007669"/>
    <property type="project" value="TreeGrafter"/>
</dbReference>
<dbReference type="GO" id="GO:0004731">
    <property type="term" value="F:purine-nucleoside phosphorylase activity"/>
    <property type="evidence" value="ECO:0007669"/>
    <property type="project" value="UniProtKB-UniRule"/>
</dbReference>
<dbReference type="GO" id="GO:0006152">
    <property type="term" value="P:purine nucleoside catabolic process"/>
    <property type="evidence" value="ECO:0007669"/>
    <property type="project" value="TreeGrafter"/>
</dbReference>
<dbReference type="CDD" id="cd09006">
    <property type="entry name" value="PNP_EcPNPI-like"/>
    <property type="match status" value="1"/>
</dbReference>
<dbReference type="FunFam" id="3.40.50.1580:FF:000002">
    <property type="entry name" value="Purine nucleoside phosphorylase DeoD-type"/>
    <property type="match status" value="1"/>
</dbReference>
<dbReference type="Gene3D" id="3.40.50.1580">
    <property type="entry name" value="Nucleoside phosphorylase domain"/>
    <property type="match status" value="1"/>
</dbReference>
<dbReference type="HAMAP" id="MF_01627">
    <property type="entry name" value="Pur_nucleosid_phosp"/>
    <property type="match status" value="1"/>
</dbReference>
<dbReference type="InterPro" id="IPR004402">
    <property type="entry name" value="DeoD-type"/>
</dbReference>
<dbReference type="InterPro" id="IPR018016">
    <property type="entry name" value="Nucleoside_phosphorylase_CS"/>
</dbReference>
<dbReference type="InterPro" id="IPR000845">
    <property type="entry name" value="Nucleoside_phosphorylase_d"/>
</dbReference>
<dbReference type="InterPro" id="IPR035994">
    <property type="entry name" value="Nucleoside_phosphorylase_sf"/>
</dbReference>
<dbReference type="NCBIfam" id="TIGR00107">
    <property type="entry name" value="deoD"/>
    <property type="match status" value="1"/>
</dbReference>
<dbReference type="NCBIfam" id="NF004489">
    <property type="entry name" value="PRK05819.1"/>
    <property type="match status" value="1"/>
</dbReference>
<dbReference type="NCBIfam" id="NF009914">
    <property type="entry name" value="PRK13374.1"/>
    <property type="match status" value="1"/>
</dbReference>
<dbReference type="PANTHER" id="PTHR43691:SF2">
    <property type="entry name" value="PURINE NUCLEOSIDE PHOSPHORYLASE DEOD-TYPE"/>
    <property type="match status" value="1"/>
</dbReference>
<dbReference type="PANTHER" id="PTHR43691">
    <property type="entry name" value="URIDINE PHOSPHORYLASE"/>
    <property type="match status" value="1"/>
</dbReference>
<dbReference type="Pfam" id="PF01048">
    <property type="entry name" value="PNP_UDP_1"/>
    <property type="match status" value="1"/>
</dbReference>
<dbReference type="SUPFAM" id="SSF53167">
    <property type="entry name" value="Purine and uridine phosphorylases"/>
    <property type="match status" value="1"/>
</dbReference>
<dbReference type="PROSITE" id="PS01232">
    <property type="entry name" value="PNP_UDP_1"/>
    <property type="match status" value="1"/>
</dbReference>
<gene>
    <name evidence="2" type="primary">deoD</name>
    <name type="ordered locus">plu0522</name>
</gene>
<protein>
    <recommendedName>
        <fullName evidence="2">Purine nucleoside phosphorylase DeoD-type</fullName>
        <shortName evidence="2">PNP</shortName>
        <ecNumber evidence="2">2.4.2.1</ecNumber>
    </recommendedName>
</protein>
<proteinExistence type="inferred from homology"/>
<name>DEOD_PHOLL</name>
<keyword id="KW-0328">Glycosyltransferase</keyword>
<keyword id="KW-1185">Reference proteome</keyword>
<keyword id="KW-0808">Transferase</keyword>
<sequence>MATPHINAEMGDFADVVLMPGDPLRAKYIAETFLENVRQVNDVRGMLGFTGTYKGRPISVMGHGMGIPSCSIYAKELITDFGAKVLIRVGSCGSVRHDVKLRDVVIGMGACTDSKVNRIRFKDHDFAAIADFDLVRNAVDAAKAKNINVRVGNIFSVELFYTPDPQLFDIMEKYGILGVEMEAAGFYGVAAEYGAKALTICTVSDHIRTHEKLTAEERQTTFNEMIEIALESVLLGDK</sequence>
<evidence type="ECO:0000250" key="1">
    <source>
        <dbReference type="UniProtKB" id="P50389"/>
    </source>
</evidence>
<evidence type="ECO:0000255" key="2">
    <source>
        <dbReference type="HAMAP-Rule" id="MF_01627"/>
    </source>
</evidence>
<feature type="chain" id="PRO_0000063153" description="Purine nucleoside phosphorylase DeoD-type">
    <location>
        <begin position="1"/>
        <end position="238"/>
    </location>
</feature>
<feature type="active site" description="Proton donor" evidence="2">
    <location>
        <position position="205"/>
    </location>
</feature>
<feature type="binding site" evidence="1">
    <location>
        <position position="5"/>
    </location>
    <ligand>
        <name>a purine D-ribonucleoside</name>
        <dbReference type="ChEBI" id="CHEBI:142355"/>
        <note>ligand shared between dimeric partners</note>
    </ligand>
</feature>
<feature type="binding site" description="in other chain" evidence="1">
    <location>
        <position position="21"/>
    </location>
    <ligand>
        <name>phosphate</name>
        <dbReference type="ChEBI" id="CHEBI:43474"/>
        <note>ligand shared between dimeric partners</note>
    </ligand>
</feature>
<feature type="binding site" description="in other chain" evidence="1">
    <location>
        <position position="25"/>
    </location>
    <ligand>
        <name>phosphate</name>
        <dbReference type="ChEBI" id="CHEBI:43474"/>
        <note>ligand shared between dimeric partners</note>
    </ligand>
</feature>
<feature type="binding site" evidence="1">
    <location>
        <position position="44"/>
    </location>
    <ligand>
        <name>phosphate</name>
        <dbReference type="ChEBI" id="CHEBI:43474"/>
        <note>ligand shared between dimeric partners</note>
    </ligand>
</feature>
<feature type="binding site" description="in other chain" evidence="1">
    <location>
        <begin position="88"/>
        <end position="91"/>
    </location>
    <ligand>
        <name>phosphate</name>
        <dbReference type="ChEBI" id="CHEBI:43474"/>
        <note>ligand shared between dimeric partners</note>
    </ligand>
</feature>
<feature type="binding site" description="in other chain" evidence="1">
    <location>
        <begin position="180"/>
        <end position="182"/>
    </location>
    <ligand>
        <name>a purine D-ribonucleoside</name>
        <dbReference type="ChEBI" id="CHEBI:142355"/>
        <note>ligand shared between dimeric partners</note>
    </ligand>
</feature>
<feature type="binding site" description="in other chain" evidence="1">
    <location>
        <begin position="204"/>
        <end position="205"/>
    </location>
    <ligand>
        <name>a purine D-ribonucleoside</name>
        <dbReference type="ChEBI" id="CHEBI:142355"/>
        <note>ligand shared between dimeric partners</note>
    </ligand>
</feature>
<feature type="site" description="Important for catalytic activity" evidence="2">
    <location>
        <position position="218"/>
    </location>
</feature>
<accession>Q7N930</accession>
<reference key="1">
    <citation type="journal article" date="2003" name="Nat. Biotechnol.">
        <title>The genome sequence of the entomopathogenic bacterium Photorhabdus luminescens.</title>
        <authorList>
            <person name="Duchaud E."/>
            <person name="Rusniok C."/>
            <person name="Frangeul L."/>
            <person name="Buchrieser C."/>
            <person name="Givaudan A."/>
            <person name="Taourit S."/>
            <person name="Bocs S."/>
            <person name="Boursaux-Eude C."/>
            <person name="Chandler M."/>
            <person name="Charles J.-F."/>
            <person name="Dassa E."/>
            <person name="Derose R."/>
            <person name="Derzelle S."/>
            <person name="Freyssinet G."/>
            <person name="Gaudriault S."/>
            <person name="Medigue C."/>
            <person name="Lanois A."/>
            <person name="Powell K."/>
            <person name="Siguier P."/>
            <person name="Vincent R."/>
            <person name="Wingate V."/>
            <person name="Zouine M."/>
            <person name="Glaser P."/>
            <person name="Boemare N."/>
            <person name="Danchin A."/>
            <person name="Kunst F."/>
        </authorList>
    </citation>
    <scope>NUCLEOTIDE SEQUENCE [LARGE SCALE GENOMIC DNA]</scope>
    <source>
        <strain>DSM 15139 / CIP 105565 / TT01</strain>
    </source>
</reference>